<sequence>MKSYENDPITDKLPKLKSSREWLEPQPLSFMEVLAKEDVDTAIQSILYRENYIIKELDKCLKHHDFLNARRKEILYKRWVDHVADPLQKKIIEKVTSYKKIKKRRQEELDGFLKYVNKKGNAFIEHYDPKEYDPFYMNRENPNFLKVTIPPFRDPLKKAQYDKDDGKRILLQCETGKIYTMKEFKEVEKAKLHSRFPGISNSRHLMTPNEWIRLPPNYIESEFCKRSRLKIKVNFNESSFDLKPSVRTPHPEFQKEDKAVHYKF</sequence>
<evidence type="ECO:0000305" key="1"/>
<gene>
    <name type="primary">FAM228B</name>
</gene>
<accession>A6QQ68</accession>
<keyword id="KW-1185">Reference proteome</keyword>
<dbReference type="EMBL" id="BC149675">
    <property type="protein sequence ID" value="AAI49676.1"/>
    <property type="molecule type" value="mRNA"/>
</dbReference>
<dbReference type="RefSeq" id="NP_001098965.1">
    <property type="nucleotide sequence ID" value="NM_001105495.2"/>
</dbReference>
<dbReference type="SMR" id="A6QQ68"/>
<dbReference type="FunCoup" id="A6QQ68">
    <property type="interactions" value="880"/>
</dbReference>
<dbReference type="STRING" id="9913.ENSBTAP00000041212"/>
<dbReference type="PaxDb" id="9913-ENSBTAP00000041212"/>
<dbReference type="Ensembl" id="ENSBTAT00000043656.3">
    <property type="protein sequence ID" value="ENSBTAP00000041212.2"/>
    <property type="gene ID" value="ENSBTAG00000030864.5"/>
</dbReference>
<dbReference type="GeneID" id="100125925"/>
<dbReference type="KEGG" id="bta:100125925"/>
<dbReference type="CTD" id="375190"/>
<dbReference type="VEuPathDB" id="HostDB:ENSBTAG00000030864"/>
<dbReference type="eggNOG" id="ENOG502S14E">
    <property type="taxonomic scope" value="Eukaryota"/>
</dbReference>
<dbReference type="GeneTree" id="ENSGT00530000064185"/>
<dbReference type="HOGENOM" id="CLU_067936_1_0_1"/>
<dbReference type="InParanoid" id="A6QQ68"/>
<dbReference type="OMA" id="KVCSYKK"/>
<dbReference type="OrthoDB" id="9905773at2759"/>
<dbReference type="TreeFam" id="TF336288"/>
<dbReference type="Proteomes" id="UP000009136">
    <property type="component" value="Chromosome 11"/>
</dbReference>
<dbReference type="Bgee" id="ENSBTAG00000030864">
    <property type="expression patterns" value="Expressed in spermatid and 102 other cell types or tissues"/>
</dbReference>
<dbReference type="InterPro" id="IPR040046">
    <property type="entry name" value="FAM228"/>
</dbReference>
<dbReference type="PANTHER" id="PTHR28584">
    <property type="entry name" value="FAMILY WITH SEQUENCE SIMILARITY 228 MEMBER A"/>
    <property type="match status" value="1"/>
</dbReference>
<dbReference type="PANTHER" id="PTHR28584:SF3">
    <property type="entry name" value="PROTEIN FAM228B"/>
    <property type="match status" value="1"/>
</dbReference>
<organism>
    <name type="scientific">Bos taurus</name>
    <name type="common">Bovine</name>
    <dbReference type="NCBI Taxonomy" id="9913"/>
    <lineage>
        <taxon>Eukaryota</taxon>
        <taxon>Metazoa</taxon>
        <taxon>Chordata</taxon>
        <taxon>Craniata</taxon>
        <taxon>Vertebrata</taxon>
        <taxon>Euteleostomi</taxon>
        <taxon>Mammalia</taxon>
        <taxon>Eutheria</taxon>
        <taxon>Laurasiatheria</taxon>
        <taxon>Artiodactyla</taxon>
        <taxon>Ruminantia</taxon>
        <taxon>Pecora</taxon>
        <taxon>Bovidae</taxon>
        <taxon>Bovinae</taxon>
        <taxon>Bos</taxon>
    </lineage>
</organism>
<comment type="similarity">
    <text evidence="1">Belongs to the FAM228 family.</text>
</comment>
<reference key="1">
    <citation type="submission" date="2007-07" db="EMBL/GenBank/DDBJ databases">
        <authorList>
            <consortium name="NIH - Mammalian Gene Collection (MGC) project"/>
        </authorList>
    </citation>
    <scope>NUCLEOTIDE SEQUENCE [LARGE SCALE MRNA]</scope>
    <source>
        <strain>Crossbred X Angus</strain>
        <tissue>Liver</tissue>
    </source>
</reference>
<feature type="chain" id="PRO_0000348448" description="Protein FAM228B">
    <location>
        <begin position="1"/>
        <end position="264"/>
    </location>
</feature>
<name>F228B_BOVIN</name>
<protein>
    <recommendedName>
        <fullName>Protein FAM228B</fullName>
    </recommendedName>
</protein>
<proteinExistence type="evidence at transcript level"/>